<comment type="catalytic activity">
    <reaction evidence="1">
        <text>D-erythro-1-(imidazol-4-yl)glycerol 3-phosphate = 3-(imidazol-4-yl)-2-oxopropyl phosphate + H2O</text>
        <dbReference type="Rhea" id="RHEA:11040"/>
        <dbReference type="ChEBI" id="CHEBI:15377"/>
        <dbReference type="ChEBI" id="CHEBI:57766"/>
        <dbReference type="ChEBI" id="CHEBI:58278"/>
        <dbReference type="EC" id="4.2.1.19"/>
    </reaction>
</comment>
<comment type="pathway">
    <text evidence="1">Amino-acid biosynthesis; L-histidine biosynthesis; L-histidine from 5-phospho-alpha-D-ribose 1-diphosphate: step 6/9.</text>
</comment>
<comment type="subcellular location">
    <subcellularLocation>
        <location evidence="1">Cytoplasm</location>
    </subcellularLocation>
</comment>
<comment type="similarity">
    <text evidence="1">Belongs to the imidazoleglycerol-phosphate dehydratase family.</text>
</comment>
<feature type="chain" id="PRO_0000336316" description="Imidazoleglycerol-phosphate dehydratase">
    <location>
        <begin position="1"/>
        <end position="198"/>
    </location>
</feature>
<reference key="1">
    <citation type="journal article" date="2007" name="PLoS Genet.">
        <title>Genome analysis of Minibacterium massiliensis highlights the convergent evolution of water-living bacteria.</title>
        <authorList>
            <person name="Audic S."/>
            <person name="Robert C."/>
            <person name="Campagna B."/>
            <person name="Parinello H."/>
            <person name="Claverie J.-M."/>
            <person name="Raoult D."/>
            <person name="Drancourt M."/>
        </authorList>
    </citation>
    <scope>NUCLEOTIDE SEQUENCE [LARGE SCALE GENOMIC DNA]</scope>
    <source>
        <strain>Marseille</strain>
    </source>
</reference>
<name>HIS7_JANMA</name>
<sequence length="198" mass="21803">MSTPRTAEITRNTNETQIRVAINIDGTGQQKLNTGVPFLDHMLDQIARHGLIDLDIEAKGDLHIDAHHTVEDVGITLGQAFAKAIGDKKGIRRYGHSYVPLDEALSRVVIDFSGRPGLEFHVPFTRSMIGTFDVDLTHEFFQGFVNHALVSLHIDNLRGANAHHQCETVFKAFGRALRMAAELDPRSVGTIPSTKGSL</sequence>
<accession>A6T379</accession>
<evidence type="ECO:0000255" key="1">
    <source>
        <dbReference type="HAMAP-Rule" id="MF_00076"/>
    </source>
</evidence>
<organism>
    <name type="scientific">Janthinobacterium sp. (strain Marseille)</name>
    <name type="common">Minibacterium massiliensis</name>
    <dbReference type="NCBI Taxonomy" id="375286"/>
    <lineage>
        <taxon>Bacteria</taxon>
        <taxon>Pseudomonadati</taxon>
        <taxon>Pseudomonadota</taxon>
        <taxon>Betaproteobacteria</taxon>
        <taxon>Burkholderiales</taxon>
        <taxon>Oxalobacteraceae</taxon>
        <taxon>Janthinobacterium</taxon>
    </lineage>
</organism>
<proteinExistence type="inferred from homology"/>
<gene>
    <name evidence="1" type="primary">hisB</name>
    <name type="ordered locus">mma_3286</name>
</gene>
<protein>
    <recommendedName>
        <fullName evidence="1">Imidazoleglycerol-phosphate dehydratase</fullName>
        <shortName evidence="1">IGPD</shortName>
        <ecNumber evidence="1">4.2.1.19</ecNumber>
    </recommendedName>
</protein>
<dbReference type="EC" id="4.2.1.19" evidence="1"/>
<dbReference type="EMBL" id="CP000269">
    <property type="protein sequence ID" value="ABR88436.1"/>
    <property type="molecule type" value="Genomic_DNA"/>
</dbReference>
<dbReference type="RefSeq" id="WP_012081129.1">
    <property type="nucleotide sequence ID" value="NC_009659.1"/>
</dbReference>
<dbReference type="SMR" id="A6T379"/>
<dbReference type="STRING" id="375286.mma_3286"/>
<dbReference type="KEGG" id="mms:mma_3286"/>
<dbReference type="eggNOG" id="COG0131">
    <property type="taxonomic scope" value="Bacteria"/>
</dbReference>
<dbReference type="HOGENOM" id="CLU_044308_3_0_4"/>
<dbReference type="OrthoDB" id="9790411at2"/>
<dbReference type="UniPathway" id="UPA00031">
    <property type="reaction ID" value="UER00011"/>
</dbReference>
<dbReference type="Proteomes" id="UP000006388">
    <property type="component" value="Chromosome"/>
</dbReference>
<dbReference type="GO" id="GO:0005737">
    <property type="term" value="C:cytoplasm"/>
    <property type="evidence" value="ECO:0007669"/>
    <property type="project" value="UniProtKB-SubCell"/>
</dbReference>
<dbReference type="GO" id="GO:0004424">
    <property type="term" value="F:imidazoleglycerol-phosphate dehydratase activity"/>
    <property type="evidence" value="ECO:0007669"/>
    <property type="project" value="UniProtKB-UniRule"/>
</dbReference>
<dbReference type="GO" id="GO:0000105">
    <property type="term" value="P:L-histidine biosynthetic process"/>
    <property type="evidence" value="ECO:0007669"/>
    <property type="project" value="UniProtKB-UniRule"/>
</dbReference>
<dbReference type="CDD" id="cd07914">
    <property type="entry name" value="IGPD"/>
    <property type="match status" value="1"/>
</dbReference>
<dbReference type="FunFam" id="3.30.230.40:FF:000002">
    <property type="entry name" value="Imidazoleglycerol-phosphate dehydratase"/>
    <property type="match status" value="1"/>
</dbReference>
<dbReference type="FunFam" id="3.30.230.40:FF:000003">
    <property type="entry name" value="Imidazoleglycerol-phosphate dehydratase HisB"/>
    <property type="match status" value="1"/>
</dbReference>
<dbReference type="Gene3D" id="3.30.230.40">
    <property type="entry name" value="Imidazole glycerol phosphate dehydratase, domain 1"/>
    <property type="match status" value="2"/>
</dbReference>
<dbReference type="HAMAP" id="MF_00076">
    <property type="entry name" value="HisB"/>
    <property type="match status" value="1"/>
</dbReference>
<dbReference type="InterPro" id="IPR038494">
    <property type="entry name" value="IGPD_sf"/>
</dbReference>
<dbReference type="InterPro" id="IPR000807">
    <property type="entry name" value="ImidazoleglycerolP_deHydtase"/>
</dbReference>
<dbReference type="InterPro" id="IPR020565">
    <property type="entry name" value="ImidazoleglycerP_deHydtase_CS"/>
</dbReference>
<dbReference type="InterPro" id="IPR020568">
    <property type="entry name" value="Ribosomal_Su5_D2-typ_SF"/>
</dbReference>
<dbReference type="NCBIfam" id="NF002106">
    <property type="entry name" value="PRK00951.1-1"/>
    <property type="match status" value="1"/>
</dbReference>
<dbReference type="NCBIfam" id="NF002109">
    <property type="entry name" value="PRK00951.1-5"/>
    <property type="match status" value="1"/>
</dbReference>
<dbReference type="NCBIfam" id="NF002111">
    <property type="entry name" value="PRK00951.2-1"/>
    <property type="match status" value="1"/>
</dbReference>
<dbReference type="NCBIfam" id="NF002114">
    <property type="entry name" value="PRK00951.2-4"/>
    <property type="match status" value="1"/>
</dbReference>
<dbReference type="PANTHER" id="PTHR23133:SF2">
    <property type="entry name" value="IMIDAZOLEGLYCEROL-PHOSPHATE DEHYDRATASE"/>
    <property type="match status" value="1"/>
</dbReference>
<dbReference type="PANTHER" id="PTHR23133">
    <property type="entry name" value="IMIDAZOLEGLYCEROL-PHOSPHATE DEHYDRATASE HIS7"/>
    <property type="match status" value="1"/>
</dbReference>
<dbReference type="Pfam" id="PF00475">
    <property type="entry name" value="IGPD"/>
    <property type="match status" value="1"/>
</dbReference>
<dbReference type="SUPFAM" id="SSF54211">
    <property type="entry name" value="Ribosomal protein S5 domain 2-like"/>
    <property type="match status" value="2"/>
</dbReference>
<dbReference type="PROSITE" id="PS00954">
    <property type="entry name" value="IGP_DEHYDRATASE_1"/>
    <property type="match status" value="1"/>
</dbReference>
<dbReference type="PROSITE" id="PS00955">
    <property type="entry name" value="IGP_DEHYDRATASE_2"/>
    <property type="match status" value="1"/>
</dbReference>
<keyword id="KW-0028">Amino-acid biosynthesis</keyword>
<keyword id="KW-0963">Cytoplasm</keyword>
<keyword id="KW-0368">Histidine biosynthesis</keyword>
<keyword id="KW-0456">Lyase</keyword>